<evidence type="ECO:0000255" key="1">
    <source>
        <dbReference type="HAMAP-Rule" id="MF_01321"/>
    </source>
</evidence>
<evidence type="ECO:0000256" key="2">
    <source>
        <dbReference type="SAM" id="MobiDB-lite"/>
    </source>
</evidence>
<comment type="function">
    <text evidence="1">DNA-dependent RNA polymerase catalyzes the transcription of DNA into RNA using the four ribonucleoside triphosphates as substrates.</text>
</comment>
<comment type="catalytic activity">
    <reaction evidence="1">
        <text>RNA(n) + a ribonucleoside 5'-triphosphate = RNA(n+1) + diphosphate</text>
        <dbReference type="Rhea" id="RHEA:21248"/>
        <dbReference type="Rhea" id="RHEA-COMP:14527"/>
        <dbReference type="Rhea" id="RHEA-COMP:17342"/>
        <dbReference type="ChEBI" id="CHEBI:33019"/>
        <dbReference type="ChEBI" id="CHEBI:61557"/>
        <dbReference type="ChEBI" id="CHEBI:140395"/>
        <dbReference type="EC" id="2.7.7.6"/>
    </reaction>
</comment>
<comment type="subunit">
    <text evidence="1">The RNAP catalytic core consists of 2 alpha, 1 beta, 1 beta' and 1 omega subunit. When a sigma factor is associated with the core the holoenzyme is formed, which can initiate transcription.</text>
</comment>
<comment type="similarity">
    <text evidence="1">Belongs to the RNA polymerase beta chain family.</text>
</comment>
<dbReference type="EC" id="2.7.7.6" evidence="1"/>
<dbReference type="EMBL" id="CR936503">
    <property type="protein sequence ID" value="CAI56083.1"/>
    <property type="molecule type" value="Genomic_DNA"/>
</dbReference>
<dbReference type="RefSeq" id="WP_011375457.1">
    <property type="nucleotide sequence ID" value="NC_007576.1"/>
</dbReference>
<dbReference type="SMR" id="Q38UQ2"/>
<dbReference type="STRING" id="314315.LCA_1775"/>
<dbReference type="KEGG" id="lsa:LCA_1775"/>
<dbReference type="eggNOG" id="COG0085">
    <property type="taxonomic scope" value="Bacteria"/>
</dbReference>
<dbReference type="HOGENOM" id="CLU_000524_4_1_9"/>
<dbReference type="OrthoDB" id="9803954at2"/>
<dbReference type="Proteomes" id="UP000002707">
    <property type="component" value="Chromosome"/>
</dbReference>
<dbReference type="GO" id="GO:0000428">
    <property type="term" value="C:DNA-directed RNA polymerase complex"/>
    <property type="evidence" value="ECO:0007669"/>
    <property type="project" value="UniProtKB-KW"/>
</dbReference>
<dbReference type="GO" id="GO:0003677">
    <property type="term" value="F:DNA binding"/>
    <property type="evidence" value="ECO:0007669"/>
    <property type="project" value="UniProtKB-UniRule"/>
</dbReference>
<dbReference type="GO" id="GO:0003899">
    <property type="term" value="F:DNA-directed RNA polymerase activity"/>
    <property type="evidence" value="ECO:0007669"/>
    <property type="project" value="UniProtKB-UniRule"/>
</dbReference>
<dbReference type="GO" id="GO:0032549">
    <property type="term" value="F:ribonucleoside binding"/>
    <property type="evidence" value="ECO:0007669"/>
    <property type="project" value="InterPro"/>
</dbReference>
<dbReference type="GO" id="GO:0006351">
    <property type="term" value="P:DNA-templated transcription"/>
    <property type="evidence" value="ECO:0007669"/>
    <property type="project" value="UniProtKB-UniRule"/>
</dbReference>
<dbReference type="CDD" id="cd00653">
    <property type="entry name" value="RNA_pol_B_RPB2"/>
    <property type="match status" value="1"/>
</dbReference>
<dbReference type="FunFam" id="3.90.1800.10:FF:000001">
    <property type="entry name" value="DNA-directed RNA polymerase subunit beta"/>
    <property type="match status" value="1"/>
</dbReference>
<dbReference type="Gene3D" id="2.40.50.100">
    <property type="match status" value="1"/>
</dbReference>
<dbReference type="Gene3D" id="2.40.50.150">
    <property type="match status" value="1"/>
</dbReference>
<dbReference type="Gene3D" id="3.90.1100.10">
    <property type="match status" value="2"/>
</dbReference>
<dbReference type="Gene3D" id="2.30.150.10">
    <property type="entry name" value="DNA-directed RNA polymerase, beta subunit, external 1 domain"/>
    <property type="match status" value="1"/>
</dbReference>
<dbReference type="Gene3D" id="2.40.270.10">
    <property type="entry name" value="DNA-directed RNA polymerase, subunit 2, domain 6"/>
    <property type="match status" value="1"/>
</dbReference>
<dbReference type="Gene3D" id="3.90.1800.10">
    <property type="entry name" value="RNA polymerase alpha subunit dimerisation domain"/>
    <property type="match status" value="1"/>
</dbReference>
<dbReference type="Gene3D" id="3.90.1110.10">
    <property type="entry name" value="RNA polymerase Rpb2, domain 2"/>
    <property type="match status" value="1"/>
</dbReference>
<dbReference type="HAMAP" id="MF_01321">
    <property type="entry name" value="RNApol_bact_RpoB"/>
    <property type="match status" value="1"/>
</dbReference>
<dbReference type="InterPro" id="IPR042107">
    <property type="entry name" value="DNA-dir_RNA_pol_bsu_ext_1_sf"/>
</dbReference>
<dbReference type="InterPro" id="IPR019462">
    <property type="entry name" value="DNA-dir_RNA_pol_bsu_external_1"/>
</dbReference>
<dbReference type="InterPro" id="IPR015712">
    <property type="entry name" value="DNA-dir_RNA_pol_su2"/>
</dbReference>
<dbReference type="InterPro" id="IPR007120">
    <property type="entry name" value="DNA-dir_RNAP_su2_dom"/>
</dbReference>
<dbReference type="InterPro" id="IPR037033">
    <property type="entry name" value="DNA-dir_RNAP_su2_hyb_sf"/>
</dbReference>
<dbReference type="InterPro" id="IPR010243">
    <property type="entry name" value="RNA_pol_bsu_bac"/>
</dbReference>
<dbReference type="InterPro" id="IPR007121">
    <property type="entry name" value="RNA_pol_bsu_CS"/>
</dbReference>
<dbReference type="InterPro" id="IPR007644">
    <property type="entry name" value="RNA_pol_bsu_protrusion"/>
</dbReference>
<dbReference type="InterPro" id="IPR007642">
    <property type="entry name" value="RNA_pol_Rpb2_2"/>
</dbReference>
<dbReference type="InterPro" id="IPR037034">
    <property type="entry name" value="RNA_pol_Rpb2_2_sf"/>
</dbReference>
<dbReference type="InterPro" id="IPR007645">
    <property type="entry name" value="RNA_pol_Rpb2_3"/>
</dbReference>
<dbReference type="InterPro" id="IPR007641">
    <property type="entry name" value="RNA_pol_Rpb2_7"/>
</dbReference>
<dbReference type="InterPro" id="IPR014724">
    <property type="entry name" value="RNA_pol_RPB2_OB-fold"/>
</dbReference>
<dbReference type="NCBIfam" id="NF001616">
    <property type="entry name" value="PRK00405.1"/>
    <property type="match status" value="1"/>
</dbReference>
<dbReference type="NCBIfam" id="TIGR02013">
    <property type="entry name" value="rpoB"/>
    <property type="match status" value="1"/>
</dbReference>
<dbReference type="PANTHER" id="PTHR20856">
    <property type="entry name" value="DNA-DIRECTED RNA POLYMERASE I SUBUNIT 2"/>
    <property type="match status" value="1"/>
</dbReference>
<dbReference type="Pfam" id="PF04563">
    <property type="entry name" value="RNA_pol_Rpb2_1"/>
    <property type="match status" value="1"/>
</dbReference>
<dbReference type="Pfam" id="PF04561">
    <property type="entry name" value="RNA_pol_Rpb2_2"/>
    <property type="match status" value="2"/>
</dbReference>
<dbReference type="Pfam" id="PF04565">
    <property type="entry name" value="RNA_pol_Rpb2_3"/>
    <property type="match status" value="1"/>
</dbReference>
<dbReference type="Pfam" id="PF10385">
    <property type="entry name" value="RNA_pol_Rpb2_45"/>
    <property type="match status" value="1"/>
</dbReference>
<dbReference type="Pfam" id="PF00562">
    <property type="entry name" value="RNA_pol_Rpb2_6"/>
    <property type="match status" value="1"/>
</dbReference>
<dbReference type="Pfam" id="PF04560">
    <property type="entry name" value="RNA_pol_Rpb2_7"/>
    <property type="match status" value="1"/>
</dbReference>
<dbReference type="SUPFAM" id="SSF64484">
    <property type="entry name" value="beta and beta-prime subunits of DNA dependent RNA-polymerase"/>
    <property type="match status" value="1"/>
</dbReference>
<dbReference type="PROSITE" id="PS01166">
    <property type="entry name" value="RNA_POL_BETA"/>
    <property type="match status" value="1"/>
</dbReference>
<organism>
    <name type="scientific">Latilactobacillus sakei subsp. sakei (strain 23K)</name>
    <name type="common">Lactobacillus sakei subsp. sakei</name>
    <dbReference type="NCBI Taxonomy" id="314315"/>
    <lineage>
        <taxon>Bacteria</taxon>
        <taxon>Bacillati</taxon>
        <taxon>Bacillota</taxon>
        <taxon>Bacilli</taxon>
        <taxon>Lactobacillales</taxon>
        <taxon>Lactobacillaceae</taxon>
        <taxon>Latilactobacillus</taxon>
    </lineage>
</organism>
<reference key="1">
    <citation type="journal article" date="2005" name="Nat. Biotechnol.">
        <title>The complete genome sequence of the meat-borne lactic acid bacterium Lactobacillus sakei 23K.</title>
        <authorList>
            <person name="Chaillou S."/>
            <person name="Champomier-Verges M.-C."/>
            <person name="Cornet M."/>
            <person name="Crutz-Le Coq A.-M."/>
            <person name="Dudez A.-M."/>
            <person name="Martin V."/>
            <person name="Beaufils S."/>
            <person name="Darbon-Rongere E."/>
            <person name="Bossy R."/>
            <person name="Loux V."/>
            <person name="Zagorec M."/>
        </authorList>
    </citation>
    <scope>NUCLEOTIDE SEQUENCE [LARGE SCALE GENOMIC DNA]</scope>
    <source>
        <strain>23K</strain>
    </source>
</reference>
<accession>Q38UQ2</accession>
<gene>
    <name evidence="1" type="primary">rpoB</name>
    <name type="ordered locus">LCA_1775</name>
</gene>
<keyword id="KW-0240">DNA-directed RNA polymerase</keyword>
<keyword id="KW-0548">Nucleotidyltransferase</keyword>
<keyword id="KW-1185">Reference proteome</keyword>
<keyword id="KW-0804">Transcription</keyword>
<keyword id="KW-0808">Transferase</keyword>
<protein>
    <recommendedName>
        <fullName evidence="1">DNA-directed RNA polymerase subunit beta</fullName>
        <shortName evidence="1">RNAP subunit beta</shortName>
        <ecNumber evidence="1">2.7.7.6</ecNumber>
    </recommendedName>
    <alternativeName>
        <fullName evidence="1">RNA polymerase subunit beta</fullName>
    </alternativeName>
    <alternativeName>
        <fullName evidence="1">Transcriptase subunit beta</fullName>
    </alternativeName>
</protein>
<feature type="chain" id="PRO_0000224066" description="DNA-directed RNA polymerase subunit beta">
    <location>
        <begin position="1"/>
        <end position="1197"/>
    </location>
</feature>
<feature type="region of interest" description="Disordered" evidence="2">
    <location>
        <begin position="1172"/>
        <end position="1197"/>
    </location>
</feature>
<feature type="compositionally biased region" description="Basic and acidic residues" evidence="2">
    <location>
        <begin position="1172"/>
        <end position="1185"/>
    </location>
</feature>
<feature type="compositionally biased region" description="Low complexity" evidence="2">
    <location>
        <begin position="1186"/>
        <end position="1197"/>
    </location>
</feature>
<sequence length="1197" mass="133762">MAGHLVNYGKHRTRRSYARIKEVLELPNLIEIQSNSYQWFLDEGLREMFDDIMPIDDFAGNLSLEFVDYQLLEPKYTVEEARQHDANYSAPLHVTLKLTNHETGEIKSQDVFFGDFPLMTDQGTFIINGAERVIVSQLVRSPGVYFNSAIDKNSRTTYGTTVIPNRGAWLEFETDAKDIAYVRIDRTRKIPMSVLVRALGYGSDQEIIDILGDNDSLMLTLEKDIHKNTDDSRTEEALKDVYERLRPGEPKTADSSRSLLFARFFDAKRYDLASVGRYKINKKLSLKTRLLGQTLAETLADPDTGEVIAAKDTVVDRQVMDALAPYLDCEDFKAVTYQPSDEGVLPEPMTLQVIKVYSQKTPDKEINLIGNGHIDAKVKHVIPADIIASMNYFFNLQEGLGSTDDIDHLGNRRIRSVGELLQNQFRIGLSRMERVVRERMSIQDTSTVTPQQLINIRPVVASIKEFFGSSQLSQFMDQTNPLGELTHKRRLSALGPGGLTRDRAGYEVRDVHYTHYGRMCPIETPEGPNIGLINSLASYAVVNRYGFIETPYRRVSWDTHDVTDKIDYLTADEEDNYVIAQANSPLNDDGSFVDNTVLARYKDDNIETSIDKLDYMDVSPKQVVAVATACIPFLENDDSNRALMGANMQRQAVPLVNPHAPLVGTGMEYKAAHDSGIALLAQHAGTVEYVDAKVIRVRREDSSLDTYELMKFRRSNAGKNYNQRPIVAKGDHVDVDEIIADGPAMEKGELALGQNPLIAFMTWNMYNYEDAIVLSERLVKEDLYTSIHIEEYESEARDTKLGPEEITREIPNVGEDSLKDLDEFGIVRVGAEVKDGDILVGKVTPKGVTELSAEERLLHAIFGEKAREVRDTSLKVPHGGGGIIQDVKIFTREAGDELSPGVNMMVRVYITQKRKIQVGDKMAGRHGNKGTVSIVVPEEDMPYTPDGTPVDILLSPMGVPSRMNIGQVLELHLGMAARNLGIHVATPVFDGAQDKDLWDAVREANMPSDGKSILYDGRTGEPFDTRVSVGVMYYMKLAHMVDDKLHARSIGPYSLVTQQPLGGKAQFGGQRFGEMEVWALEAYGAAYTLQEILTYKSDDVVGRVKTYEAIVKGEPIPKPGVPESFRVLVKELQSLGLDMKVLDIDNQEIELRDMDDDDDDVVNVDALSKYAKEQEEKKAQQEAEKAQAASAEDPSAE</sequence>
<name>RPOB_LATSS</name>
<proteinExistence type="inferred from homology"/>